<organism>
    <name type="scientific">Rattus norvegicus</name>
    <name type="common">Rat</name>
    <dbReference type="NCBI Taxonomy" id="10116"/>
    <lineage>
        <taxon>Eukaryota</taxon>
        <taxon>Metazoa</taxon>
        <taxon>Chordata</taxon>
        <taxon>Craniata</taxon>
        <taxon>Vertebrata</taxon>
        <taxon>Euteleostomi</taxon>
        <taxon>Mammalia</taxon>
        <taxon>Eutheria</taxon>
        <taxon>Euarchontoglires</taxon>
        <taxon>Glires</taxon>
        <taxon>Rodentia</taxon>
        <taxon>Myomorpha</taxon>
        <taxon>Muroidea</taxon>
        <taxon>Muridae</taxon>
        <taxon>Murinae</taxon>
        <taxon>Rattus</taxon>
    </lineage>
</organism>
<evidence type="ECO:0000250" key="1"/>
<evidence type="ECO:0000250" key="2">
    <source>
        <dbReference type="UniProtKB" id="P62736"/>
    </source>
</evidence>
<evidence type="ECO:0000250" key="3">
    <source>
        <dbReference type="UniProtKB" id="P62737"/>
    </source>
</evidence>
<evidence type="ECO:0000250" key="4">
    <source>
        <dbReference type="UniProtKB" id="P62739"/>
    </source>
</evidence>
<evidence type="ECO:0000250" key="5">
    <source>
        <dbReference type="UniProtKB" id="P68032"/>
    </source>
</evidence>
<evidence type="ECO:0000250" key="6">
    <source>
        <dbReference type="UniProtKB" id="P68137"/>
    </source>
</evidence>
<evidence type="ECO:0000305" key="7"/>
<reference key="1">
    <citation type="journal article" date="1988" name="Nucleic Acids Res.">
        <title>The nucleotide sequence of a rat vascular smooth muscle alpha-actin cDNA.</title>
        <authorList>
            <person name="McHugh K.M."/>
            <person name="Lessard J.L."/>
        </authorList>
    </citation>
    <scope>NUCLEOTIDE SEQUENCE [MRNA]</scope>
    <source>
        <tissue>Stomach</tissue>
    </source>
</reference>
<reference key="2">
    <citation type="journal article" date="1984" name="Nucleic Acids Res.">
        <title>Expression of the genes coding for the skeletal muscle and cardiac actions in the heart.</title>
        <authorList>
            <person name="Mayer Y."/>
            <person name="Czosnek H."/>
            <person name="Zeelon E.P."/>
            <person name="Yaffe D."/>
            <person name="Nudel U."/>
        </authorList>
    </citation>
    <scope>NUCLEOTIDE SEQUENCE [MRNA] OF 285-377</scope>
</reference>
<reference key="3">
    <citation type="journal article" date="1988" name="Gene">
        <title>Conserved and unique sequences in the 3'-untranslated region of rat smooth-muscle alpha-actin mRNA.</title>
        <authorList>
            <person name="Hsu C.Y."/>
            <person name="Frankel F.R."/>
        </authorList>
    </citation>
    <scope>NUCLEOTIDE SEQUENCE [MRNA] OF 336-377</scope>
</reference>
<name>ACTA_RAT</name>
<keyword id="KW-0007">Acetylation</keyword>
<keyword id="KW-0067">ATP-binding</keyword>
<keyword id="KW-0963">Cytoplasm</keyword>
<keyword id="KW-0206">Cytoskeleton</keyword>
<keyword id="KW-0378">Hydrolase</keyword>
<keyword id="KW-0488">Methylation</keyword>
<keyword id="KW-0514">Muscle protein</keyword>
<keyword id="KW-0547">Nucleotide-binding</keyword>
<keyword id="KW-0558">Oxidation</keyword>
<keyword id="KW-1185">Reference proteome</keyword>
<dbReference type="EC" id="3.6.4.-" evidence="6"/>
<dbReference type="EMBL" id="X06801">
    <property type="protein sequence ID" value="CAA29957.1"/>
    <property type="molecule type" value="mRNA"/>
</dbReference>
<dbReference type="EMBL" id="X00306">
    <property type="protein sequence ID" value="CAA25083.1"/>
    <property type="molecule type" value="mRNA"/>
</dbReference>
<dbReference type="EMBL" id="M22757">
    <property type="protein sequence ID" value="AAA74457.1"/>
    <property type="molecule type" value="mRNA"/>
</dbReference>
<dbReference type="PIR" id="JE0005">
    <property type="entry name" value="JE0005"/>
</dbReference>
<dbReference type="RefSeq" id="NP_112266.1">
    <property type="nucleotide sequence ID" value="NM_031004.2"/>
</dbReference>
<dbReference type="SMR" id="P62738"/>
<dbReference type="BioGRID" id="249533">
    <property type="interactions" value="2"/>
</dbReference>
<dbReference type="FunCoup" id="P62738">
    <property type="interactions" value="305"/>
</dbReference>
<dbReference type="IntAct" id="P62738">
    <property type="interactions" value="2"/>
</dbReference>
<dbReference type="STRING" id="10116.ENSRNOP00000073101"/>
<dbReference type="CarbonylDB" id="P62738"/>
<dbReference type="GlyGen" id="P62738">
    <property type="glycosylation" value="1 site, 1 O-linked glycan (1 site)"/>
</dbReference>
<dbReference type="PhosphoSitePlus" id="P62738"/>
<dbReference type="jPOST" id="P62738"/>
<dbReference type="Ensembl" id="ENSRNOT00000083468.2">
    <property type="protein sequence ID" value="ENSRNOP00000073101.2"/>
    <property type="gene ID" value="ENSRNOG00000058039.2"/>
</dbReference>
<dbReference type="GeneID" id="81633"/>
<dbReference type="KEGG" id="rno:81633"/>
<dbReference type="AGR" id="RGD:621676"/>
<dbReference type="CTD" id="59"/>
<dbReference type="RGD" id="621676">
    <property type="gene designation" value="Acta2"/>
</dbReference>
<dbReference type="GeneTree" id="ENSGT00940000154148"/>
<dbReference type="InParanoid" id="P62738"/>
<dbReference type="OMA" id="ESCEAAP"/>
<dbReference type="OrthoDB" id="3107at9989"/>
<dbReference type="Reactome" id="R-RNO-445355">
    <property type="pathway name" value="Smooth Muscle Contraction"/>
</dbReference>
<dbReference type="Reactome" id="R-RNO-9913351">
    <property type="pathway name" value="Formation of the dystrophin-glycoprotein complex (DGC)"/>
</dbReference>
<dbReference type="PRO" id="PR:P62738"/>
<dbReference type="Proteomes" id="UP000002494">
    <property type="component" value="Chromosome 1"/>
</dbReference>
<dbReference type="GO" id="GO:0015629">
    <property type="term" value="C:actin cytoskeleton"/>
    <property type="evidence" value="ECO:0000314"/>
    <property type="project" value="MGI"/>
</dbReference>
<dbReference type="GO" id="GO:0005604">
    <property type="term" value="C:basement membrane"/>
    <property type="evidence" value="ECO:0000314"/>
    <property type="project" value="RGD"/>
</dbReference>
<dbReference type="GO" id="GO:0044297">
    <property type="term" value="C:cell body"/>
    <property type="evidence" value="ECO:0000250"/>
    <property type="project" value="AgBase"/>
</dbReference>
<dbReference type="GO" id="GO:0005737">
    <property type="term" value="C:cytoplasm"/>
    <property type="evidence" value="ECO:0000250"/>
    <property type="project" value="AgBase"/>
</dbReference>
<dbReference type="GO" id="GO:0005856">
    <property type="term" value="C:cytoskeleton"/>
    <property type="evidence" value="ECO:0000266"/>
    <property type="project" value="RGD"/>
</dbReference>
<dbReference type="GO" id="GO:0030175">
    <property type="term" value="C:filopodium"/>
    <property type="evidence" value="ECO:0000250"/>
    <property type="project" value="AgBase"/>
</dbReference>
<dbReference type="GO" id="GO:0030027">
    <property type="term" value="C:lamellipodium"/>
    <property type="evidence" value="ECO:0000250"/>
    <property type="project" value="AgBase"/>
</dbReference>
<dbReference type="GO" id="GO:0031514">
    <property type="term" value="C:motile cilium"/>
    <property type="evidence" value="ECO:0000266"/>
    <property type="project" value="RGD"/>
</dbReference>
<dbReference type="GO" id="GO:0032991">
    <property type="term" value="C:protein-containing complex"/>
    <property type="evidence" value="ECO:0000266"/>
    <property type="project" value="RGD"/>
</dbReference>
<dbReference type="GO" id="GO:0030485">
    <property type="term" value="C:smooth muscle contractile fiber"/>
    <property type="evidence" value="ECO:0000266"/>
    <property type="project" value="RGD"/>
</dbReference>
<dbReference type="GO" id="GO:0001725">
    <property type="term" value="C:stress fiber"/>
    <property type="evidence" value="ECO:0000314"/>
    <property type="project" value="RGD"/>
</dbReference>
<dbReference type="GO" id="GO:0005524">
    <property type="term" value="F:ATP binding"/>
    <property type="evidence" value="ECO:0007669"/>
    <property type="project" value="UniProtKB-KW"/>
</dbReference>
<dbReference type="GO" id="GO:0016787">
    <property type="term" value="F:hydrolase activity"/>
    <property type="evidence" value="ECO:0007669"/>
    <property type="project" value="UniProtKB-KW"/>
</dbReference>
<dbReference type="GO" id="GO:0019901">
    <property type="term" value="F:protein kinase binding"/>
    <property type="evidence" value="ECO:0000266"/>
    <property type="project" value="RGD"/>
</dbReference>
<dbReference type="GO" id="GO:0071560">
    <property type="term" value="P:cellular response to transforming growth factor beta stimulus"/>
    <property type="evidence" value="ECO:0000270"/>
    <property type="project" value="RGD"/>
</dbReference>
<dbReference type="GO" id="GO:0072144">
    <property type="term" value="P:glomerular mesangial cell development"/>
    <property type="evidence" value="ECO:0000266"/>
    <property type="project" value="RGD"/>
</dbReference>
<dbReference type="GO" id="GO:0072051">
    <property type="term" value="P:juxtaglomerular apparatus development"/>
    <property type="evidence" value="ECO:0000270"/>
    <property type="project" value="RGD"/>
</dbReference>
<dbReference type="GO" id="GO:0090131">
    <property type="term" value="P:mesenchyme migration"/>
    <property type="evidence" value="ECO:0000250"/>
    <property type="project" value="AgBase"/>
</dbReference>
<dbReference type="GO" id="GO:0006936">
    <property type="term" value="P:muscle contraction"/>
    <property type="evidence" value="ECO:0000314"/>
    <property type="project" value="RGD"/>
</dbReference>
<dbReference type="GO" id="GO:0070374">
    <property type="term" value="P:positive regulation of ERK1 and ERK2 cascade"/>
    <property type="evidence" value="ECO:0000315"/>
    <property type="project" value="RGD"/>
</dbReference>
<dbReference type="GO" id="GO:0010628">
    <property type="term" value="P:positive regulation of gene expression"/>
    <property type="evidence" value="ECO:0000250"/>
    <property type="project" value="AgBase"/>
</dbReference>
<dbReference type="GO" id="GO:2000491">
    <property type="term" value="P:positive regulation of hepatic stellate cell activation"/>
    <property type="evidence" value="ECO:0000315"/>
    <property type="project" value="RGD"/>
</dbReference>
<dbReference type="GO" id="GO:0061874">
    <property type="term" value="P:positive regulation of hepatic stellate cell contraction"/>
    <property type="evidence" value="ECO:0000315"/>
    <property type="project" value="RGD"/>
</dbReference>
<dbReference type="GO" id="GO:0061870">
    <property type="term" value="P:positive regulation of hepatic stellate cell migration"/>
    <property type="evidence" value="ECO:0000315"/>
    <property type="project" value="RGD"/>
</dbReference>
<dbReference type="GO" id="GO:0008217">
    <property type="term" value="P:regulation of blood pressure"/>
    <property type="evidence" value="ECO:0000266"/>
    <property type="project" value="RGD"/>
</dbReference>
<dbReference type="GO" id="GO:0009615">
    <property type="term" value="P:response to virus"/>
    <property type="evidence" value="ECO:0000266"/>
    <property type="project" value="RGD"/>
</dbReference>
<dbReference type="GO" id="GO:0014829">
    <property type="term" value="P:vascular associated smooth muscle contraction"/>
    <property type="evidence" value="ECO:0000266"/>
    <property type="project" value="RGD"/>
</dbReference>
<dbReference type="CDD" id="cd10224">
    <property type="entry name" value="ASKHA_NBD_actin"/>
    <property type="match status" value="1"/>
</dbReference>
<dbReference type="FunFam" id="3.30.420.40:FF:000131">
    <property type="entry name" value="Actin, alpha skeletal muscle"/>
    <property type="match status" value="1"/>
</dbReference>
<dbReference type="FunFam" id="3.30.420.40:FF:000291">
    <property type="entry name" value="Actin, alpha skeletal muscle"/>
    <property type="match status" value="1"/>
</dbReference>
<dbReference type="FunFam" id="3.90.640.10:FF:000047">
    <property type="entry name" value="Actin, alpha skeletal muscle"/>
    <property type="match status" value="1"/>
</dbReference>
<dbReference type="FunFam" id="3.30.420.40:FF:000058">
    <property type="entry name" value="Putative actin-related protein 5"/>
    <property type="match status" value="1"/>
</dbReference>
<dbReference type="Gene3D" id="3.30.420.40">
    <property type="match status" value="2"/>
</dbReference>
<dbReference type="Gene3D" id="3.90.640.10">
    <property type="entry name" value="Actin, Chain A, domain 4"/>
    <property type="match status" value="1"/>
</dbReference>
<dbReference type="InterPro" id="IPR004000">
    <property type="entry name" value="Actin"/>
</dbReference>
<dbReference type="InterPro" id="IPR020902">
    <property type="entry name" value="Actin/actin-like_CS"/>
</dbReference>
<dbReference type="InterPro" id="IPR004001">
    <property type="entry name" value="Actin_CS"/>
</dbReference>
<dbReference type="InterPro" id="IPR043129">
    <property type="entry name" value="ATPase_NBD"/>
</dbReference>
<dbReference type="PANTHER" id="PTHR11937">
    <property type="entry name" value="ACTIN"/>
    <property type="match status" value="1"/>
</dbReference>
<dbReference type="Pfam" id="PF00022">
    <property type="entry name" value="Actin"/>
    <property type="match status" value="1"/>
</dbReference>
<dbReference type="PRINTS" id="PR00190">
    <property type="entry name" value="ACTIN"/>
</dbReference>
<dbReference type="SMART" id="SM00268">
    <property type="entry name" value="ACTIN"/>
    <property type="match status" value="1"/>
</dbReference>
<dbReference type="SUPFAM" id="SSF53067">
    <property type="entry name" value="Actin-like ATPase domain"/>
    <property type="match status" value="2"/>
</dbReference>
<dbReference type="PROSITE" id="PS00406">
    <property type="entry name" value="ACTINS_1"/>
    <property type="match status" value="1"/>
</dbReference>
<dbReference type="PROSITE" id="PS00432">
    <property type="entry name" value="ACTINS_2"/>
    <property type="match status" value="1"/>
</dbReference>
<dbReference type="PROSITE" id="PS01132">
    <property type="entry name" value="ACTINS_ACT_LIKE"/>
    <property type="match status" value="1"/>
</dbReference>
<gene>
    <name type="primary">Acta2</name>
    <name type="synonym">Actsa</name>
    <name type="synonym">Actvs</name>
</gene>
<protein>
    <recommendedName>
        <fullName>Actin, aortic smooth muscle</fullName>
        <ecNumber evidence="6">3.6.4.-</ecNumber>
    </recommendedName>
    <alternativeName>
        <fullName>Alpha-actin-2</fullName>
    </alternativeName>
    <component>
        <recommendedName>
            <fullName>Actin, aortic smooth muscle, intermediate form</fullName>
        </recommendedName>
    </component>
</protein>
<comment type="function">
    <text>Actins are highly conserved proteins that are involved in various types of cell motility and are ubiquitously expressed in all eukaryotic cells.</text>
</comment>
<comment type="catalytic activity">
    <reaction evidence="6">
        <text>ATP + H2O = ADP + phosphate + H(+)</text>
        <dbReference type="Rhea" id="RHEA:13065"/>
        <dbReference type="ChEBI" id="CHEBI:15377"/>
        <dbReference type="ChEBI" id="CHEBI:15378"/>
        <dbReference type="ChEBI" id="CHEBI:30616"/>
        <dbReference type="ChEBI" id="CHEBI:43474"/>
        <dbReference type="ChEBI" id="CHEBI:456216"/>
    </reaction>
</comment>
<comment type="subunit">
    <text>Polymerization of globular actin (G-actin) leads to a structural filament (F-actin) in the form of a two-stranded helix. Each actin can bind to 4 others.</text>
</comment>
<comment type="subcellular location">
    <subcellularLocation>
        <location>Cytoplasm</location>
        <location>Cytoskeleton</location>
    </subcellularLocation>
</comment>
<comment type="PTM">
    <molecule>Actin, aortic smooth muscle, intermediate form</molecule>
    <text evidence="3">N-terminal cleavage of acetylated cysteine of intermediate muscle actin by ACTMAP.</text>
</comment>
<comment type="PTM">
    <text evidence="3">Oxidation of Met-46 and Met-49 by MICALs (MICAL1, MICAL2 or MICAL3) to form methionine sulfoxide promotes actin filament depolymerization. MICAL1 and MICAL2 produce the (R)-S-oxide form. The (R)-S-oxide form is reverted by MSRB1 and MSRB2, which promotes actin repolymerization.</text>
</comment>
<comment type="PTM">
    <text evidence="1">Monomethylation at Lys-86 (K84me1) regulates actin-myosin interaction and actomyosin-dependent processes. Demethylation by ALKBH4 is required for maintaining actomyosin dynamics supporting normal cleavage furrow ingression during cytokinesis and cell migration (By similarity).</text>
</comment>
<comment type="PTM">
    <text evidence="2">Methylated at His-75 by SETD3.</text>
</comment>
<comment type="miscellaneous">
    <text>In vertebrates 3 main groups of actin isoforms, alpha, beta and gamma have been identified. The alpha actins are found in muscle tissues and are a major constituent of the contractile apparatus. The beta and gamma actins coexist in most cell types as components of the cytoskeleton and as mediators of internal cell motility.</text>
</comment>
<comment type="similarity">
    <text evidence="7">Belongs to the actin family.</text>
</comment>
<proteinExistence type="evidence at transcript level"/>
<feature type="initiator methionine" description="Removed" evidence="2">
    <location>
        <position position="1"/>
    </location>
</feature>
<feature type="chain" id="PRO_0000442609" description="Actin, aortic smooth muscle, intermediate form" evidence="3">
    <location>
        <begin position="2"/>
        <end position="377"/>
    </location>
</feature>
<feature type="chain" id="PRO_0000442610" description="Actin, aortic smooth muscle" evidence="3">
    <location>
        <begin position="3"/>
        <end position="377"/>
    </location>
</feature>
<feature type="modified residue" description="N-acetylcysteine; in intermediate form" evidence="3">
    <location>
        <position position="2"/>
    </location>
</feature>
<feature type="modified residue" description="Methionine (R)-sulfoxide" evidence="3">
    <location>
        <position position="46"/>
    </location>
</feature>
<feature type="modified residue" description="Methionine (R)-sulfoxide" evidence="3">
    <location>
        <position position="49"/>
    </location>
</feature>
<feature type="modified residue" description="Tele-methylhistidine" evidence="4">
    <location>
        <position position="75"/>
    </location>
</feature>
<feature type="modified residue" description="N6-methyllysine" evidence="5">
    <location>
        <position position="86"/>
    </location>
</feature>
<accession>P62738</accession>
<accession>P03996</accession>
<accession>P04108</accession>
<accession>P70476</accession>
<sequence length="377" mass="42009">MCEEEDSTALVCDNGSGLCKAGFAGDDAPRAVFPSIVGRPRHQGVMVGMGQKDSYVGDEAQSKRGILTLKYPIEHGIITNWDDMEKIWHHSFYNELRVAPEEHPTLLTEAPLNPKANREKMTQIMFETFNVPAMYVAIQAVLSLYASGRTTGIVLDSGDGVTHNVPIYEGYALPHAIMRLDLAGRDLTDYLMKILTERGYSFVTTAEREIVRDIKEKLCYVALDFENEMATAASSSSLEKSYELPDGQVITIGNERFRCPETLFQPSFIGMESAGIHETTYNSIMKCDIDIRKDLYANNVLSGGTTMYPGIADRMQKEITALAPSTMKIKIIAPPERKYSVWIGGSILASLSTFQQMWISKQEYDEAGPSIVHRKCF</sequence>